<comment type="function">
    <text evidence="4">Involved in plant defense. Confers resistance to the fungal pathogen T.viride through recognition of the EIX elicitor protein.</text>
</comment>
<comment type="subunit">
    <text evidence="1">Interacts with EIX elicitor protein.</text>
</comment>
<comment type="subcellular location">
    <subcellularLocation>
        <location evidence="5">Cell membrane</location>
        <topology evidence="5">Single-pass type I membrane protein</topology>
    </subcellularLocation>
</comment>
<comment type="similarity">
    <text evidence="5">Belongs to the RLP family.</text>
</comment>
<accession>Q6JN47</accession>
<accession>K4CBY1</accession>
<feature type="signal peptide" evidence="6">
    <location>
        <begin position="1"/>
        <end position="29"/>
    </location>
</feature>
<feature type="chain" id="PRO_5004276343" description="Receptor-like protein EIX1">
    <location>
        <begin position="30"/>
        <end position="1031"/>
    </location>
</feature>
<feature type="topological domain" description="Extracellular" evidence="2">
    <location>
        <begin position="30"/>
        <end position="971"/>
    </location>
</feature>
<feature type="transmembrane region" description="Helical" evidence="2">
    <location>
        <begin position="972"/>
        <end position="992"/>
    </location>
</feature>
<feature type="topological domain" description="Cytoplasmic" evidence="2">
    <location>
        <begin position="993"/>
        <end position="1031"/>
    </location>
</feature>
<feature type="repeat" description="LRR 1" evidence="2">
    <location>
        <begin position="117"/>
        <end position="140"/>
    </location>
</feature>
<feature type="repeat" description="LRR 2; degenerate" evidence="5">
    <location>
        <begin position="142"/>
        <end position="165"/>
    </location>
</feature>
<feature type="repeat" description="LRR 3" evidence="2">
    <location>
        <begin position="166"/>
        <end position="189"/>
    </location>
</feature>
<feature type="repeat" description="LRR 4" evidence="2">
    <location>
        <begin position="191"/>
        <end position="215"/>
    </location>
</feature>
<feature type="repeat" description="LRR 5" evidence="2">
    <location>
        <begin position="216"/>
        <end position="240"/>
    </location>
</feature>
<feature type="repeat" description="LRR 6" evidence="2">
    <location>
        <begin position="243"/>
        <end position="266"/>
    </location>
</feature>
<feature type="repeat" description="LRR 7" evidence="2">
    <location>
        <begin position="269"/>
        <end position="292"/>
    </location>
</feature>
<feature type="repeat" description="LRR 8" evidence="2">
    <location>
        <begin position="293"/>
        <end position="317"/>
    </location>
</feature>
<feature type="repeat" description="LRR 9" evidence="2">
    <location>
        <begin position="318"/>
        <end position="341"/>
    </location>
</feature>
<feature type="repeat" description="LRR 10" evidence="2">
    <location>
        <begin position="346"/>
        <end position="369"/>
    </location>
</feature>
<feature type="repeat" description="LRR 11" evidence="2">
    <location>
        <begin position="370"/>
        <end position="393"/>
    </location>
</feature>
<feature type="repeat" description="LRR 12" evidence="2">
    <location>
        <begin position="394"/>
        <end position="416"/>
    </location>
</feature>
<feature type="repeat" description="LRR 13" evidence="2">
    <location>
        <begin position="417"/>
        <end position="440"/>
    </location>
</feature>
<feature type="repeat" description="LRR 14" evidence="2">
    <location>
        <begin position="441"/>
        <end position="463"/>
    </location>
</feature>
<feature type="repeat" description="LRR 15" evidence="2">
    <location>
        <begin position="465"/>
        <end position="487"/>
    </location>
</feature>
<feature type="repeat" description="LRR 16" evidence="2">
    <location>
        <begin position="488"/>
        <end position="509"/>
    </location>
</feature>
<feature type="repeat" description="LRR 17" evidence="2">
    <location>
        <begin position="512"/>
        <end position="536"/>
    </location>
</feature>
<feature type="repeat" description="LRR 18" evidence="2">
    <location>
        <begin position="538"/>
        <end position="559"/>
    </location>
</feature>
<feature type="repeat" description="LRR 19" evidence="2">
    <location>
        <begin position="561"/>
        <end position="584"/>
    </location>
</feature>
<feature type="repeat" description="LRR 20" evidence="2">
    <location>
        <begin position="586"/>
        <end position="611"/>
    </location>
</feature>
<feature type="repeat" description="LRR 21; degenerate" evidence="5">
    <location>
        <begin position="612"/>
        <end position="629"/>
    </location>
</feature>
<feature type="repeat" description="LRR 22" evidence="2">
    <location>
        <begin position="630"/>
        <end position="654"/>
    </location>
</feature>
<feature type="repeat" description="LRR 23" evidence="2">
    <location>
        <begin position="655"/>
        <end position="678"/>
    </location>
</feature>
<feature type="repeat" description="LRR 24" evidence="2">
    <location>
        <begin position="679"/>
        <end position="703"/>
    </location>
</feature>
<feature type="repeat" description="LRR 25" evidence="2">
    <location>
        <begin position="705"/>
        <end position="725"/>
    </location>
</feature>
<feature type="repeat" description="LRR 26" evidence="2">
    <location>
        <begin position="726"/>
        <end position="750"/>
    </location>
</feature>
<feature type="repeat" description="LRR 27" evidence="2">
    <location>
        <begin position="752"/>
        <end position="773"/>
    </location>
</feature>
<feature type="repeat" description="LRR 28" evidence="2">
    <location>
        <begin position="823"/>
        <end position="847"/>
    </location>
</feature>
<feature type="repeat" description="LRR 29" evidence="2">
    <location>
        <begin position="848"/>
        <end position="871"/>
    </location>
</feature>
<feature type="repeat" description="LRR 30" evidence="2">
    <location>
        <begin position="872"/>
        <end position="895"/>
    </location>
</feature>
<feature type="repeat" description="LRR 31" evidence="2">
    <location>
        <begin position="896"/>
        <end position="918"/>
    </location>
</feature>
<feature type="region of interest" description="N-cap" evidence="6">
    <location>
        <begin position="30"/>
        <end position="113"/>
    </location>
</feature>
<feature type="region of interest" description="C-cap/acidic domain" evidence="6">
    <location>
        <begin position="919"/>
        <end position="971"/>
    </location>
</feature>
<feature type="glycosylation site" description="N-linked (GlcNAc...) asparagine" evidence="3">
    <location>
        <position position="30"/>
    </location>
</feature>
<feature type="glycosylation site" description="N-linked (GlcNAc...) asparagine" evidence="3">
    <location>
        <position position="149"/>
    </location>
</feature>
<feature type="glycosylation site" description="N-linked (GlcNAc...) asparagine" evidence="3">
    <location>
        <position position="165"/>
    </location>
</feature>
<feature type="glycosylation site" description="N-linked (GlcNAc...) asparagine" evidence="3">
    <location>
        <position position="240"/>
    </location>
</feature>
<feature type="glycosylation site" description="N-linked (GlcNAc...) asparagine" evidence="3">
    <location>
        <position position="267"/>
    </location>
</feature>
<feature type="glycosylation site" description="N-linked (GlcNAc...) asparagine" evidence="3">
    <location>
        <position position="317"/>
    </location>
</feature>
<feature type="glycosylation site" description="N-linked (GlcNAc...) asparagine" evidence="3">
    <location>
        <position position="365"/>
    </location>
</feature>
<feature type="glycosylation site" description="N-linked (GlcNAc...) asparagine" evidence="3">
    <location>
        <position position="383"/>
    </location>
</feature>
<feature type="glycosylation site" description="N-linked (GlcNAc...) asparagine" evidence="3">
    <location>
        <position position="487"/>
    </location>
</feature>
<feature type="glycosylation site" description="N-linked (GlcNAc...) asparagine" evidence="3">
    <location>
        <position position="538"/>
    </location>
</feature>
<feature type="glycosylation site" description="N-linked (GlcNAc...) asparagine" evidence="3">
    <location>
        <position position="568"/>
    </location>
</feature>
<feature type="glycosylation site" description="N-linked (GlcNAc...) asparagine" evidence="3">
    <location>
        <position position="597"/>
    </location>
</feature>
<feature type="glycosylation site" description="N-linked (GlcNAc...) asparagine" evidence="3">
    <location>
        <position position="653"/>
    </location>
</feature>
<feature type="glycosylation site" description="N-linked (GlcNAc...) asparagine" evidence="3">
    <location>
        <position position="666"/>
    </location>
</feature>
<feature type="glycosylation site" description="N-linked (GlcNAc...) asparagine" evidence="3">
    <location>
        <position position="773"/>
    </location>
</feature>
<feature type="glycosylation site" description="N-linked (GlcNAc...) asparagine" evidence="3">
    <location>
        <position position="781"/>
    </location>
</feature>
<feature type="glycosylation site" description="N-linked (GlcNAc...) asparagine" evidence="3">
    <location>
        <position position="854"/>
    </location>
</feature>
<feature type="glycosylation site" description="N-linked (GlcNAc...) asparagine" evidence="3">
    <location>
        <position position="861"/>
    </location>
</feature>
<feature type="glycosylation site" description="N-linked (GlcNAc...) asparagine" evidence="3">
    <location>
        <position position="894"/>
    </location>
</feature>
<feature type="sequence conflict" description="In Ref. 1; AAR28377." evidence="5" ref="1">
    <original>V</original>
    <variation>A</variation>
    <location>
        <position position="232"/>
    </location>
</feature>
<feature type="sequence conflict" description="In Ref. 1; AAR28377." evidence="5" ref="1">
    <original>L</original>
    <variation>F</variation>
    <location>
        <position position="243"/>
    </location>
</feature>
<organism>
    <name type="scientific">Solanum lycopersicum</name>
    <name type="common">Tomato</name>
    <name type="synonym">Lycopersicon esculentum</name>
    <dbReference type="NCBI Taxonomy" id="4081"/>
    <lineage>
        <taxon>Eukaryota</taxon>
        <taxon>Viridiplantae</taxon>
        <taxon>Streptophyta</taxon>
        <taxon>Embryophyta</taxon>
        <taxon>Tracheophyta</taxon>
        <taxon>Spermatophyta</taxon>
        <taxon>Magnoliopsida</taxon>
        <taxon>eudicotyledons</taxon>
        <taxon>Gunneridae</taxon>
        <taxon>Pentapetalae</taxon>
        <taxon>asterids</taxon>
        <taxon>lamiids</taxon>
        <taxon>Solanales</taxon>
        <taxon>Solanaceae</taxon>
        <taxon>Solanoideae</taxon>
        <taxon>Solaneae</taxon>
        <taxon>Solanum</taxon>
        <taxon>Solanum subgen. Lycopersicon</taxon>
    </lineage>
</organism>
<reference key="1">
    <citation type="journal article" date="2004" name="Plant Cell">
        <title>The receptor for the fungal elicitor ethylene-inducing xylanase is a member of a resistance-like gene family in tomato.</title>
        <authorList>
            <person name="Ron M."/>
            <person name="Avni A."/>
        </authorList>
    </citation>
    <scope>NUCLEOTIDE SEQUENCE [MRNA]</scope>
    <scope>FUNCTION</scope>
    <source>
        <strain>cv. Rio Grande</strain>
    </source>
</reference>
<reference key="2">
    <citation type="journal article" date="2012" name="Nature">
        <title>The tomato genome sequence provides insights into fleshy fruit evolution.</title>
        <authorList>
            <consortium name="Tomato Genome Consortium"/>
        </authorList>
    </citation>
    <scope>NUCLEOTIDE SEQUENCE [LARGE SCALE GENOMIC DNA]</scope>
    <source>
        <strain>cv. Heinz 1706</strain>
    </source>
</reference>
<name>EIX1_SOLLC</name>
<proteinExistence type="evidence at transcript level"/>
<keyword id="KW-1003">Cell membrane</keyword>
<keyword id="KW-0325">Glycoprotein</keyword>
<keyword id="KW-0433">Leucine-rich repeat</keyword>
<keyword id="KW-0472">Membrane</keyword>
<keyword id="KW-0611">Plant defense</keyword>
<keyword id="KW-0675">Receptor</keyword>
<keyword id="KW-1185">Reference proteome</keyword>
<keyword id="KW-0677">Repeat</keyword>
<keyword id="KW-0732">Signal</keyword>
<keyword id="KW-0812">Transmembrane</keyword>
<keyword id="KW-1133">Transmembrane helix</keyword>
<sequence length="1031" mass="115747">MDKWKYARLAQFLFTLSLLFLETSFGLGGNKTLCLDKERDALLEFKRGLTDSFDHLSTWGDEEDKQECCKWKGIECDRRTGHVTVIDLHNKFTCSAGASACFAPRLTGKLSPSLLELEYLNYLDLSVNEFERSEIPRFIGSLKRLEYLNLSASFFSGVIPIQFQNLTSLRTLDLGENNLIVKDLRWLSHLSSLEFLSLSSSNFQVNNWFQEITKVPSLKELDLSGCGLSKLVPSQADLANSSLISLSVLHLCCNEFSSSSEYSWVFNLTTSLTSIDLLYNQLSGQIDDRFGTLMYLEHLDLANNLKIEGGVPSSFGNLTRLRHLDMSNTQTVQWLPELFLRLSGSRKSLEVLGLNENSLFGSIVNATRFSSLKKLYLQKNMLNGSFMESAGQVSTLEYLDLSENQMRGALPDLALFPSLRELHLGSNQFRGRIPQGIGKLSQLRILDVSSNRLEGLPESMGQLSNLESFDASYNVLKGTITESHLSNLSSLVDLDLSFNSLALKTSFNWLPPFQLQVISLPSCNLGPSFPKWLQNQNNYTVLDISLASISDTLPSWFSSFPPDLKILNLSNNQISGRVSDLIENTYGYRVIDLSYNNFSGALPLVPTNVQIFYLHKNQFFGSISSICRSRTSPTSLDLSHNQFSGELPDCWMNMTSLAVLNLAYNNFSGEIPHSLGSLTNLKALYIRQNSLSGMLPSFSQCQGLQILDLGGNKLTGSIPGWIGTDLLNLRILSLRFNRLHGSIPSIICQLQFLQILDLSANGLSGKIPHCFNNFTLLYQDNNSGEPMEFIVQGFYGKFPRRYLYIGDLLVQWKNQESEYKNPLLYLKTIDLSSNELIGGVPKEIADMRGLKSLNLSRNELNGTVIEGIGQMRMLESLDMSRNQLSGVIPQDLANLTFLSVLDLSNNQLSGRIPSSTQLQSFDRSSYSDNAQLCGPPLQECPGYAPPSPLIDHGSNNNPQEHDEEEEFPSLEFYISMVLSFFVAFWGILGCLIVNSSWRNAYFKFLTDTTSWLDMISRVWFARLKKKLRRAR</sequence>
<dbReference type="EMBL" id="AY359965">
    <property type="protein sequence ID" value="AAR28377.1"/>
    <property type="molecule type" value="mRNA"/>
</dbReference>
<dbReference type="EMBL" id="CM001070">
    <property type="status" value="NOT_ANNOTATED_CDS"/>
    <property type="molecule type" value="Genomic_DNA"/>
</dbReference>
<dbReference type="RefSeq" id="NP_001234427.1">
    <property type="nucleotide sequence ID" value="NM_001247498.2"/>
</dbReference>
<dbReference type="SMR" id="Q6JN47"/>
<dbReference type="FunCoup" id="Q6JN47">
    <property type="interactions" value="568"/>
</dbReference>
<dbReference type="STRING" id="4081.Q6JN47"/>
<dbReference type="GlyCosmos" id="Q6JN47">
    <property type="glycosylation" value="19 sites, No reported glycans"/>
</dbReference>
<dbReference type="PaxDb" id="4081-Solyc07g008620.1.1"/>
<dbReference type="EnsemblPlants" id="Solyc07g008620.1.1">
    <property type="protein sequence ID" value="Solyc07g008620.1.1.1"/>
    <property type="gene ID" value="Solyc07g008620.1"/>
</dbReference>
<dbReference type="GeneID" id="543900"/>
<dbReference type="Gramene" id="Solyc07g008620.1.1">
    <property type="protein sequence ID" value="Solyc07g008620.1.1.1"/>
    <property type="gene ID" value="Solyc07g008620.1"/>
</dbReference>
<dbReference type="KEGG" id="sly:543900"/>
<dbReference type="eggNOG" id="KOG0619">
    <property type="taxonomic scope" value="Eukaryota"/>
</dbReference>
<dbReference type="InParanoid" id="Q6JN47"/>
<dbReference type="OMA" id="EIPRFIC"/>
<dbReference type="OrthoDB" id="8731593at2759"/>
<dbReference type="Proteomes" id="UP000004994">
    <property type="component" value="Chromosome 7"/>
</dbReference>
<dbReference type="GO" id="GO:0005886">
    <property type="term" value="C:plasma membrane"/>
    <property type="evidence" value="ECO:0007669"/>
    <property type="project" value="UniProtKB-SubCell"/>
</dbReference>
<dbReference type="GO" id="GO:0050832">
    <property type="term" value="P:defense response to fungus"/>
    <property type="evidence" value="ECO:0000314"/>
    <property type="project" value="UniProtKB"/>
</dbReference>
<dbReference type="FunFam" id="3.80.10.10:FF:000920">
    <property type="entry name" value="mRNA, clone: RTFL01-33-G14"/>
    <property type="match status" value="1"/>
</dbReference>
<dbReference type="FunFam" id="3.80.10.10:FF:001488">
    <property type="entry name" value="Receptor-like protein EIX1"/>
    <property type="match status" value="1"/>
</dbReference>
<dbReference type="Gene3D" id="3.80.10.10">
    <property type="entry name" value="Ribonuclease Inhibitor"/>
    <property type="match status" value="6"/>
</dbReference>
<dbReference type="InterPro" id="IPR001611">
    <property type="entry name" value="Leu-rich_rpt"/>
</dbReference>
<dbReference type="InterPro" id="IPR003591">
    <property type="entry name" value="Leu-rich_rpt_typical-subtyp"/>
</dbReference>
<dbReference type="InterPro" id="IPR032675">
    <property type="entry name" value="LRR_dom_sf"/>
</dbReference>
<dbReference type="InterPro" id="IPR013210">
    <property type="entry name" value="LRR_N_plant-typ"/>
</dbReference>
<dbReference type="InterPro" id="IPR046956">
    <property type="entry name" value="RLP23-like"/>
</dbReference>
<dbReference type="PANTHER" id="PTHR48063:SF103">
    <property type="entry name" value="LEUCINE-RICH RECEPTOR-LIKE KINASE FAMILY PROTEIN"/>
    <property type="match status" value="1"/>
</dbReference>
<dbReference type="PANTHER" id="PTHR48063">
    <property type="entry name" value="LRR RECEPTOR-LIKE KINASE"/>
    <property type="match status" value="1"/>
</dbReference>
<dbReference type="Pfam" id="PF00560">
    <property type="entry name" value="LRR_1"/>
    <property type="match status" value="8"/>
</dbReference>
<dbReference type="Pfam" id="PF13855">
    <property type="entry name" value="LRR_8"/>
    <property type="match status" value="5"/>
</dbReference>
<dbReference type="Pfam" id="PF08263">
    <property type="entry name" value="LRRNT_2"/>
    <property type="match status" value="1"/>
</dbReference>
<dbReference type="PRINTS" id="PR00019">
    <property type="entry name" value="LEURICHRPT"/>
</dbReference>
<dbReference type="SMART" id="SM00364">
    <property type="entry name" value="LRR_BAC"/>
    <property type="match status" value="3"/>
</dbReference>
<dbReference type="SMART" id="SM00365">
    <property type="entry name" value="LRR_SD22"/>
    <property type="match status" value="9"/>
</dbReference>
<dbReference type="SMART" id="SM00369">
    <property type="entry name" value="LRR_TYP"/>
    <property type="match status" value="11"/>
</dbReference>
<dbReference type="SUPFAM" id="SSF52058">
    <property type="entry name" value="L domain-like"/>
    <property type="match status" value="2"/>
</dbReference>
<dbReference type="SUPFAM" id="SSF52047">
    <property type="entry name" value="RNI-like"/>
    <property type="match status" value="1"/>
</dbReference>
<dbReference type="PROSITE" id="PS51450">
    <property type="entry name" value="LRR"/>
    <property type="match status" value="19"/>
</dbReference>
<gene>
    <name evidence="7" type="primary">EIX1</name>
    <name type="ordered locus">Solyc07g008620.1.1</name>
</gene>
<protein>
    <recommendedName>
        <fullName evidence="5">Receptor-like protein EIX1</fullName>
    </recommendedName>
    <alternativeName>
        <fullName evidence="7">EIX receptor 1</fullName>
    </alternativeName>
</protein>
<evidence type="ECO:0000250" key="1">
    <source>
        <dbReference type="UniProtKB" id="Q6JN46"/>
    </source>
</evidence>
<evidence type="ECO:0000255" key="2"/>
<evidence type="ECO:0000255" key="3">
    <source>
        <dbReference type="PROSITE-ProRule" id="PRU00498"/>
    </source>
</evidence>
<evidence type="ECO:0000269" key="4">
    <source>
    </source>
</evidence>
<evidence type="ECO:0000305" key="5"/>
<evidence type="ECO:0000305" key="6">
    <source>
    </source>
</evidence>
<evidence type="ECO:0000312" key="7">
    <source>
        <dbReference type="EMBL" id="AAR28377.1"/>
    </source>
</evidence>